<feature type="chain" id="PRO_0000444813" description="Nonribosomal peptide synthetase AMT10">
    <location>
        <begin position="1"/>
        <end position="900"/>
    </location>
</feature>
<feature type="domain" description="Carrier" evidence="4">
    <location>
        <begin position="824"/>
        <end position="900"/>
    </location>
</feature>
<feature type="region of interest" description="Adenylation" evidence="3">
    <location>
        <begin position="284"/>
        <end position="686"/>
    </location>
</feature>
<feature type="modified residue" description="O-(pantetheine 4'-phosphoryl)serine" evidence="4">
    <location>
        <position position="861"/>
    </location>
</feature>
<sequence length="900" mass="98347">MYCDKGASSLANGLLPNVSGDITAKDNILDALDSSAEEHFWGRYIDGFEGQIFPQIPVSVHEAHLTGRARYEIILGNSMVTTLYTVSSIIRTGWALLVSQYTESQDVVIVSSLELPSQAMGGTILFPIRFRIRQDGRTEELLQSAKKHADKVLSSQKHDFPHTKDFVDPFSNSILLICTESQPSHSLEELLTELSASKKCALVLRCELLEDKISISAMFDPQVVRPRQTRRILDQLGHILKQISGSDMLVGDLDFLSPEDRQEIGRWNSRSALSDECIHALISKQAQQNPAAMAVNAHDGNFTYGELESYATRLAAHLIHIGVKPGNFVPTLFEKSKWTQVGILAILKAGAAFVMLDPSHPPARNQLICRKANACFALASAPCEPVLSMAVPHVITLSHSFMEELGRLQPPHEQKSPCLDPRAVAYLLFTSGSTGQPKGAILEHRSFAAASRGVVAMTHMSSTTRTLQHSSYSFGAAIVEIIATLVAGGCVVVLSDTERLSNVAASMVAYSVNWAFMTPSFARTVNPADVPCLRVLATGGEGVTSDIVETWASFVSLYTVYGSAEQSSIAAMAGPLATHQRGNSANVGSPFAGCYAWIVQPDRPEKLAPVGCVGELVLEGALVARGYIDEVESTAAAFPKGFSWRCLFPLHQEGSTRFYRTGDLVRYAVDGTLEFVARRNGYIKLRGQRIELGEIESQLKAVARQPYEFCVEVVVPKGETADKAVLVAFVALGSAYTDNEICESAISSPEQFDQGILVDVLGHVEERLAETLPAFMIPRFFFPLQHFPVTSSGKIARKILREQAAQMSVLQLAELSLGSVEKKELQSDMERYLRSVWVQLLGVPEDFIGANDSFFRVGGDSLKAIKLFQRLRRDGYNLNVTSIVAAPTLSQMARNCSLLD</sequence>
<protein>
    <recommendedName>
        <fullName evidence="2">Nonribosomal peptide synthetase AMT10</fullName>
        <ecNumber evidence="2">6.3.2.-</ecNumber>
    </recommendedName>
    <alternativeName>
        <fullName evidence="8">AM-toxin biosynthesis protein 10</fullName>
    </alternativeName>
</protein>
<reference key="1">
    <citation type="journal article" date="2007" name="Mol. Plant Microbe Interact.">
        <title>Expression profiles of genes encoded by the supernumerary chromosome controlling AM-toxin biosynthesis and pathogenicity in the apple pathotype of Alternaria alternata.</title>
        <authorList>
            <person name="Harimoto Y."/>
            <person name="Hatta R."/>
            <person name="Kodama M."/>
            <person name="Yamamoto M."/>
            <person name="Otani H."/>
            <person name="Tsuge T."/>
        </authorList>
    </citation>
    <scope>NUCLEOTIDE SEQUENCE [GENOMIC DNA]</scope>
    <scope>INDUCTION</scope>
    <scope>PATHWAY</scope>
    <source>
        <strain>NBRC 8984</strain>
    </source>
</reference>
<reference key="2">
    <citation type="journal article" date="2000" name="Mol. Plant Microbe Interact.">
        <title>Cloning and characterization of a cyclic peptide synthetase gene from Alternaria alternata apple pathotype whose product is involved in AM-toxin synthesis and pathogenicity.</title>
        <authorList>
            <person name="Johnson R.D."/>
            <person name="Johnson L."/>
            <person name="Itoh Y."/>
            <person name="Kodama M."/>
            <person name="Otani H."/>
            <person name="Kohmoto K."/>
        </authorList>
    </citation>
    <scope>FUNCTION</scope>
    <source>
        <strain>M-71</strain>
    </source>
</reference>
<reference key="3">
    <citation type="journal article" date="2004" name="Mol. Microbiol.">
        <title>Dissection of the host range of the fungal plant pathogen Alternaria alternata by modification of secondary metabolism.</title>
        <authorList>
            <person name="Ito K."/>
            <person name="Tanaka T."/>
            <person name="Hatta R."/>
            <person name="Yamamoto M."/>
            <person name="Akimitsu K."/>
            <person name="Tsuge T."/>
        </authorList>
    </citation>
    <scope>FUNCTION</scope>
    <source>
        <strain>NBRC 8984</strain>
    </source>
</reference>
<reference key="4">
    <citation type="journal article" date="2013" name="FEMS Microbiol. Rev.">
        <title>Host-selective toxins produced by the plant pathogenic fungus Alternaria alternata.</title>
        <authorList>
            <person name="Tsuge T."/>
            <person name="Harimoto Y."/>
            <person name="Akimitsu K."/>
            <person name="Ohtani K."/>
            <person name="Kodama M."/>
            <person name="Akagi Y."/>
            <person name="Egusa M."/>
            <person name="Yamamoto M."/>
            <person name="Otani H."/>
        </authorList>
    </citation>
    <scope>REVIEW ON HOST-SELECTIVE TOXINS</scope>
</reference>
<keyword id="KW-0413">Isomerase</keyword>
<keyword id="KW-0436">Ligase</keyword>
<keyword id="KW-0596">Phosphopantetheine</keyword>
<keyword id="KW-0597">Phosphoprotein</keyword>
<keyword id="KW-0843">Virulence</keyword>
<gene>
    <name evidence="8" type="primary">AMT10</name>
    <name evidence="8" type="synonym">AMT10-2</name>
</gene>
<comment type="function">
    <text evidence="5 6 7 9 11 12">Nonribosomal peptide synthetase; part of the gene clusters that mediate the biosynthesis of AM-toxins, host-selective toxins (HSTs) causing Alternaria blotch on apple, a worldwide distributed disease (Probable). AM-toxins are cyclic depsipeptides containing the 3 residues 2-hydroxy-isovaleric acid (2-HIV), dehydroalanine, L-alanine which are common for all 3 AM-toxins I to III. The fourth precursor is L-alpha-amino-methoxyphenyl-valeric acid (L-Amv) for AM-toxin I, L-alpha-amino-phenyl-valeric acid (L-Apv) for AM-toxin II, and L-alpha-amino-hydroxyphenyl-valeric acid (L-Ahv) for AM-toxin III (Probable). AM-toxins have two target sites for affecting susceptible apple cells; they cause invagination of the plasma membrane and electrolyte loss and chloroplast disorganization (PubMed:22846083). The non-ribosomal peptide synthetase AMT1 contains 4 catalytic modules and is responsible for activation of each residue in AM-toxin (PubMed:10875335). The aldo-keto reductase AMT2 catalyzes the conversion of 2-keto-isovaleric acid (2-KIV) to 2-hydroxy-isovaleric acid (2-HIV), one of the precursor residues incorporated by AMT1 during AM-toxin biosynthesis, by reduction of its ketone to an alcohol (PubMed:15066029). The cytochrome P450 monooxygenase AMT3 and the thioesterase AMT4 are also important for AM-toxin production, but their exact function within the AM-toxin biosynthesis are not known yet (PubMed:17990954). Up to 21 proteins (including AMT1 to AMT4) are predicted to be involved in AM-toxin biosynthesis since their expression ishighly up-regulated in AM-toxin-producing cultures (PubMed:17990954).</text>
</comment>
<comment type="pathway">
    <text evidence="12">Mycotoxin biosynthesis.</text>
</comment>
<comment type="induction">
    <text evidence="7">Expression is up-regulated more than 10 fold in toxin producing cultures.</text>
</comment>
<comment type="domain">
    <text evidence="1 10">NRP synthetases are composed of discrete domains (adenylation (A), thiolation (T) or peptidyl carrier protein (PCP) and condensation (C) domains) which when grouped together are referred to as a single module. Each module is responsible for the recognition (via the A domain) and incorporation of a single amino acid into the growing peptide product. Thus, an NRP synthetase is generally composed of one or more modules and can terminate in a thioesterase domain (TE) that releases the newly synthesized peptide from the enzyme. Occasionally, epimerase (E) domains (responsible for L- to D-amino acid conversion) are present within the NRP synthetase (By similarity). AMT10 is composed of only one module and misses a condensation (C) domain (Probable).</text>
</comment>
<comment type="miscellaneous">
    <text evidence="7">Gene clusters encoding host-selective toxins (HSTs) are localized on conditionally dispensable chromosomes (CDCs), also called supernumerary chromosomes, where they are present in multiple copies (PubMed:17990954). The CDCs are not essential for saprophytic growth but controls host-selective pathogenicity (PubMed:17990954).</text>
</comment>
<comment type="similarity">
    <text evidence="10">Belongs to the NRP synthetase family.</text>
</comment>
<evidence type="ECO:0000250" key="1">
    <source>
        <dbReference type="UniProtKB" id="Q4WAZ9"/>
    </source>
</evidence>
<evidence type="ECO:0000250" key="2">
    <source>
        <dbReference type="UniProtKB" id="Q5AUZ6"/>
    </source>
</evidence>
<evidence type="ECO:0000255" key="3"/>
<evidence type="ECO:0000255" key="4">
    <source>
        <dbReference type="PROSITE-ProRule" id="PRU00258"/>
    </source>
</evidence>
<evidence type="ECO:0000269" key="5">
    <source>
    </source>
</evidence>
<evidence type="ECO:0000269" key="6">
    <source>
    </source>
</evidence>
<evidence type="ECO:0000269" key="7">
    <source>
    </source>
</evidence>
<evidence type="ECO:0000303" key="8">
    <source>
    </source>
</evidence>
<evidence type="ECO:0000303" key="9">
    <source>
    </source>
</evidence>
<evidence type="ECO:0000305" key="10"/>
<evidence type="ECO:0000305" key="11">
    <source>
    </source>
</evidence>
<evidence type="ECO:0000305" key="12">
    <source>
    </source>
</evidence>
<proteinExistence type="evidence at transcript level"/>
<organism>
    <name type="scientific">Alternaria alternata</name>
    <name type="common">Alternaria rot fungus</name>
    <name type="synonym">Torula alternata</name>
    <dbReference type="NCBI Taxonomy" id="5599"/>
    <lineage>
        <taxon>Eukaryota</taxon>
        <taxon>Fungi</taxon>
        <taxon>Dikarya</taxon>
        <taxon>Ascomycota</taxon>
        <taxon>Pezizomycotina</taxon>
        <taxon>Dothideomycetes</taxon>
        <taxon>Pleosporomycetidae</taxon>
        <taxon>Pleosporales</taxon>
        <taxon>Pleosporineae</taxon>
        <taxon>Pleosporaceae</taxon>
        <taxon>Alternaria</taxon>
        <taxon>Alternaria sect. Alternaria</taxon>
        <taxon>Alternaria alternata complex</taxon>
    </lineage>
</organism>
<dbReference type="EC" id="6.3.2.-" evidence="2"/>
<dbReference type="EMBL" id="AB525198">
    <property type="protein sequence ID" value="BAI44745.1"/>
    <property type="molecule type" value="Genomic_DNA"/>
</dbReference>
<dbReference type="EMBL" id="AB525199">
    <property type="protein sequence ID" value="BAI44768.1"/>
    <property type="molecule type" value="Genomic_DNA"/>
</dbReference>
<dbReference type="EMBL" id="AB525200">
    <property type="protein sequence ID" value="BAI44810.1"/>
    <property type="molecule type" value="Genomic_DNA"/>
</dbReference>
<dbReference type="SMR" id="C9K7C1"/>
<dbReference type="VEuPathDB" id="FungiDB:CC77DRAFT_1065195"/>
<dbReference type="GO" id="GO:0005737">
    <property type="term" value="C:cytoplasm"/>
    <property type="evidence" value="ECO:0007669"/>
    <property type="project" value="TreeGrafter"/>
</dbReference>
<dbReference type="GO" id="GO:0016853">
    <property type="term" value="F:isomerase activity"/>
    <property type="evidence" value="ECO:0007669"/>
    <property type="project" value="UniProtKB-KW"/>
</dbReference>
<dbReference type="GO" id="GO:0016874">
    <property type="term" value="F:ligase activity"/>
    <property type="evidence" value="ECO:0007669"/>
    <property type="project" value="UniProtKB-KW"/>
</dbReference>
<dbReference type="GO" id="GO:0031177">
    <property type="term" value="F:phosphopantetheine binding"/>
    <property type="evidence" value="ECO:0007669"/>
    <property type="project" value="TreeGrafter"/>
</dbReference>
<dbReference type="GO" id="GO:0043041">
    <property type="term" value="P:amino acid activation for nonribosomal peptide biosynthetic process"/>
    <property type="evidence" value="ECO:0007669"/>
    <property type="project" value="TreeGrafter"/>
</dbReference>
<dbReference type="GO" id="GO:0044550">
    <property type="term" value="P:secondary metabolite biosynthetic process"/>
    <property type="evidence" value="ECO:0007669"/>
    <property type="project" value="TreeGrafter"/>
</dbReference>
<dbReference type="CDD" id="cd05918">
    <property type="entry name" value="A_NRPS_SidN3_like"/>
    <property type="match status" value="1"/>
</dbReference>
<dbReference type="FunFam" id="3.30.300.30:FF:000015">
    <property type="entry name" value="Nonribosomal peptide synthase SidD"/>
    <property type="match status" value="1"/>
</dbReference>
<dbReference type="Gene3D" id="3.30.300.30">
    <property type="match status" value="1"/>
</dbReference>
<dbReference type="Gene3D" id="1.10.1200.10">
    <property type="entry name" value="ACP-like"/>
    <property type="match status" value="1"/>
</dbReference>
<dbReference type="Gene3D" id="3.40.50.12780">
    <property type="entry name" value="N-terminal domain of ligase-like"/>
    <property type="match status" value="1"/>
</dbReference>
<dbReference type="Gene3D" id="3.30.559.30">
    <property type="entry name" value="Nonribosomal peptide synthetase, condensation domain"/>
    <property type="match status" value="1"/>
</dbReference>
<dbReference type="InterPro" id="IPR010071">
    <property type="entry name" value="AA_adenyl_dom"/>
</dbReference>
<dbReference type="InterPro" id="IPR036736">
    <property type="entry name" value="ACP-like_sf"/>
</dbReference>
<dbReference type="InterPro" id="IPR045851">
    <property type="entry name" value="AMP-bd_C_sf"/>
</dbReference>
<dbReference type="InterPro" id="IPR020845">
    <property type="entry name" value="AMP-binding_CS"/>
</dbReference>
<dbReference type="InterPro" id="IPR000873">
    <property type="entry name" value="AMP-dep_synth/lig_dom"/>
</dbReference>
<dbReference type="InterPro" id="IPR042099">
    <property type="entry name" value="ANL_N_sf"/>
</dbReference>
<dbReference type="InterPro" id="IPR009081">
    <property type="entry name" value="PP-bd_ACP"/>
</dbReference>
<dbReference type="NCBIfam" id="TIGR01733">
    <property type="entry name" value="AA-adenyl-dom"/>
    <property type="match status" value="1"/>
</dbReference>
<dbReference type="PANTHER" id="PTHR45527:SF1">
    <property type="entry name" value="FATTY ACID SYNTHASE"/>
    <property type="match status" value="1"/>
</dbReference>
<dbReference type="PANTHER" id="PTHR45527">
    <property type="entry name" value="NONRIBOSOMAL PEPTIDE SYNTHETASE"/>
    <property type="match status" value="1"/>
</dbReference>
<dbReference type="Pfam" id="PF00501">
    <property type="entry name" value="AMP-binding"/>
    <property type="match status" value="1"/>
</dbReference>
<dbReference type="Pfam" id="PF00550">
    <property type="entry name" value="PP-binding"/>
    <property type="match status" value="1"/>
</dbReference>
<dbReference type="SUPFAM" id="SSF56801">
    <property type="entry name" value="Acetyl-CoA synthetase-like"/>
    <property type="match status" value="1"/>
</dbReference>
<dbReference type="SUPFAM" id="SSF47336">
    <property type="entry name" value="ACP-like"/>
    <property type="match status" value="1"/>
</dbReference>
<dbReference type="SUPFAM" id="SSF52777">
    <property type="entry name" value="CoA-dependent acyltransferases"/>
    <property type="match status" value="1"/>
</dbReference>
<dbReference type="PROSITE" id="PS00455">
    <property type="entry name" value="AMP_BINDING"/>
    <property type="match status" value="1"/>
</dbReference>
<dbReference type="PROSITE" id="PS50075">
    <property type="entry name" value="CARRIER"/>
    <property type="match status" value="1"/>
</dbReference>
<accession>C9K7C1</accession>
<name>AMT10_ALTAL</name>